<accession>P0AAK2</accession>
<accession>P16428</accession>
<accession>Q46883</accession>
<gene>
    <name type="primary">hycB</name>
    <name type="ordered locus">c3284</name>
</gene>
<protein>
    <recommendedName>
        <fullName>Formate hydrogenlyase subunit 2</fullName>
        <shortName>FHL subunit 2</shortName>
    </recommendedName>
    <alternativeName>
        <fullName>Hydrogenase-3 component B</fullName>
    </alternativeName>
</protein>
<evidence type="ECO:0000250" key="1"/>
<evidence type="ECO:0000255" key="2">
    <source>
        <dbReference type="PROSITE-ProRule" id="PRU00711"/>
    </source>
</evidence>
<name>HYCB_ECOL6</name>
<organism>
    <name type="scientific">Escherichia coli O6:H1 (strain CFT073 / ATCC 700928 / UPEC)</name>
    <dbReference type="NCBI Taxonomy" id="199310"/>
    <lineage>
        <taxon>Bacteria</taxon>
        <taxon>Pseudomonadati</taxon>
        <taxon>Pseudomonadota</taxon>
        <taxon>Gammaproteobacteria</taxon>
        <taxon>Enterobacterales</taxon>
        <taxon>Enterobacteriaceae</taxon>
        <taxon>Escherichia</taxon>
    </lineage>
</organism>
<keyword id="KW-0004">4Fe-4S</keyword>
<keyword id="KW-0249">Electron transport</keyword>
<keyword id="KW-0408">Iron</keyword>
<keyword id="KW-0411">Iron-sulfur</keyword>
<keyword id="KW-0479">Metal-binding</keyword>
<keyword id="KW-1185">Reference proteome</keyword>
<keyword id="KW-0677">Repeat</keyword>
<keyword id="KW-0813">Transport</keyword>
<comment type="function">
    <text evidence="1">Probable electron transfer protein for hydrogenase 3.</text>
</comment>
<comment type="cofactor">
    <cofactor evidence="1">
        <name>[4Fe-4S] cluster</name>
        <dbReference type="ChEBI" id="CHEBI:49883"/>
    </cofactor>
    <text evidence="1">Binds 4 [4Fe-4S] clusters.</text>
</comment>
<comment type="subunit">
    <text evidence="1">FHL comprises of a formate dehydrogenase, unidentified electron carriers and a hydrogenase (isoenzyme 3). In this non-energy conserving pathway, molecular hydrogen and carbodioxide are released from formate (By similarity).</text>
</comment>
<reference key="1">
    <citation type="journal article" date="2002" name="Proc. Natl. Acad. Sci. U.S.A.">
        <title>Extensive mosaic structure revealed by the complete genome sequence of uropathogenic Escherichia coli.</title>
        <authorList>
            <person name="Welch R.A."/>
            <person name="Burland V."/>
            <person name="Plunkett G. III"/>
            <person name="Redford P."/>
            <person name="Roesch P."/>
            <person name="Rasko D."/>
            <person name="Buckles E.L."/>
            <person name="Liou S.-R."/>
            <person name="Boutin A."/>
            <person name="Hackett J."/>
            <person name="Stroud D."/>
            <person name="Mayhew G.F."/>
            <person name="Rose D.J."/>
            <person name="Zhou S."/>
            <person name="Schwartz D.C."/>
            <person name="Perna N.T."/>
            <person name="Mobley H.L.T."/>
            <person name="Donnenberg M.S."/>
            <person name="Blattner F.R."/>
        </authorList>
    </citation>
    <scope>NUCLEOTIDE SEQUENCE [LARGE SCALE GENOMIC DNA]</scope>
    <source>
        <strain>CFT073 / ATCC 700928 / UPEC</strain>
    </source>
</reference>
<dbReference type="EMBL" id="AE014075">
    <property type="protein sequence ID" value="AAN81733.1"/>
    <property type="molecule type" value="Genomic_DNA"/>
</dbReference>
<dbReference type="RefSeq" id="WP_001079186.1">
    <property type="nucleotide sequence ID" value="NZ_CP051263.1"/>
</dbReference>
<dbReference type="SMR" id="P0AAK2"/>
<dbReference type="STRING" id="199310.c3284"/>
<dbReference type="GeneID" id="86860821"/>
<dbReference type="KEGG" id="ecc:c3284"/>
<dbReference type="eggNOG" id="COG1142">
    <property type="taxonomic scope" value="Bacteria"/>
</dbReference>
<dbReference type="HOGENOM" id="CLU_043374_3_0_6"/>
<dbReference type="BioCyc" id="ECOL199310:C3284-MONOMER"/>
<dbReference type="Proteomes" id="UP000001410">
    <property type="component" value="Chromosome"/>
</dbReference>
<dbReference type="GO" id="GO:0051539">
    <property type="term" value="F:4 iron, 4 sulfur cluster binding"/>
    <property type="evidence" value="ECO:0007669"/>
    <property type="project" value="UniProtKB-KW"/>
</dbReference>
<dbReference type="GO" id="GO:0046872">
    <property type="term" value="F:metal ion binding"/>
    <property type="evidence" value="ECO:0007669"/>
    <property type="project" value="UniProtKB-KW"/>
</dbReference>
<dbReference type="CDD" id="cd10554">
    <property type="entry name" value="HycB_like"/>
    <property type="match status" value="1"/>
</dbReference>
<dbReference type="FunFam" id="3.30.70.20:FF:000036">
    <property type="entry name" value="4Fe-4S dicluster domain-containing protein"/>
    <property type="match status" value="1"/>
</dbReference>
<dbReference type="Gene3D" id="3.30.70.20">
    <property type="match status" value="2"/>
</dbReference>
<dbReference type="InterPro" id="IPR017896">
    <property type="entry name" value="4Fe4S_Fe-S-bd"/>
</dbReference>
<dbReference type="InterPro" id="IPR017900">
    <property type="entry name" value="4Fe4S_Fe_S_CS"/>
</dbReference>
<dbReference type="InterPro" id="IPR050294">
    <property type="entry name" value="RnfB_subfamily"/>
</dbReference>
<dbReference type="PANTHER" id="PTHR42859:SF16">
    <property type="entry name" value="FORMATE HYDROGENLYASE SUBUNIT 2-RELATED"/>
    <property type="match status" value="1"/>
</dbReference>
<dbReference type="PANTHER" id="PTHR42859">
    <property type="entry name" value="OXIDOREDUCTASE"/>
    <property type="match status" value="1"/>
</dbReference>
<dbReference type="Pfam" id="PF13247">
    <property type="entry name" value="Fer4_11"/>
    <property type="match status" value="1"/>
</dbReference>
<dbReference type="SUPFAM" id="SSF54862">
    <property type="entry name" value="4Fe-4S ferredoxins"/>
    <property type="match status" value="1"/>
</dbReference>
<dbReference type="PROSITE" id="PS00198">
    <property type="entry name" value="4FE4S_FER_1"/>
    <property type="match status" value="1"/>
</dbReference>
<dbReference type="PROSITE" id="PS51379">
    <property type="entry name" value="4FE4S_FER_2"/>
    <property type="match status" value="4"/>
</dbReference>
<proteinExistence type="inferred from homology"/>
<sequence>MNRFVIADSTLCIGCHTCEAACSETHRQHGLQSMPRLRVMLNEKESAPQLCHHCEDAPCAVVCPVNAITRVDGAVQLNESLCVSCKLCGIACPFGAIEFSGSRPLDIPANANTPKAPPAPPAPARVSTLLDWVPGIRAIAVKCDLCSFDEQGPACVRMCPTKALHLVDNTDIARVSKRKRELTFNTDFGDLTLFQQAQSGEAK</sequence>
<feature type="chain" id="PRO_0000159264" description="Formate hydrogenlyase subunit 2">
    <location>
        <begin position="1"/>
        <end position="203"/>
    </location>
</feature>
<feature type="domain" description="4Fe-4S ferredoxin-type 1" evidence="2">
    <location>
        <begin position="2"/>
        <end position="32"/>
    </location>
</feature>
<feature type="domain" description="4Fe-4S ferredoxin-type 2" evidence="2">
    <location>
        <begin position="42"/>
        <end position="72"/>
    </location>
</feature>
<feature type="domain" description="4Fe-4S ferredoxin-type 3" evidence="2">
    <location>
        <begin position="73"/>
        <end position="102"/>
    </location>
</feature>
<feature type="domain" description="4Fe-4S ferredoxin-type 4" evidence="2">
    <location>
        <begin position="137"/>
        <end position="169"/>
    </location>
</feature>
<feature type="binding site" evidence="1">
    <location>
        <position position="12"/>
    </location>
    <ligand>
        <name>[4Fe-4S] cluster</name>
        <dbReference type="ChEBI" id="CHEBI:49883"/>
        <label>1</label>
    </ligand>
</feature>
<feature type="binding site" evidence="1">
    <location>
        <position position="15"/>
    </location>
    <ligand>
        <name>[4Fe-4S] cluster</name>
        <dbReference type="ChEBI" id="CHEBI:49883"/>
        <label>1</label>
    </ligand>
</feature>
<feature type="binding site" evidence="1">
    <location>
        <position position="18"/>
    </location>
    <ligand>
        <name>[4Fe-4S] cluster</name>
        <dbReference type="ChEBI" id="CHEBI:49883"/>
        <label>1</label>
    </ligand>
</feature>
<feature type="binding site" evidence="1">
    <location>
        <position position="22"/>
    </location>
    <ligand>
        <name>[4Fe-4S] cluster</name>
        <dbReference type="ChEBI" id="CHEBI:49883"/>
        <label>2</label>
    </ligand>
</feature>
<feature type="binding site" evidence="1">
    <location>
        <position position="51"/>
    </location>
    <ligand>
        <name>[4Fe-4S] cluster</name>
        <dbReference type="ChEBI" id="CHEBI:49883"/>
        <label>3</label>
    </ligand>
</feature>
<feature type="binding site" evidence="1">
    <location>
        <position position="54"/>
    </location>
    <ligand>
        <name>[4Fe-4S] cluster</name>
        <dbReference type="ChEBI" id="CHEBI:49883"/>
        <label>3</label>
    </ligand>
</feature>
<feature type="binding site" evidence="1">
    <location>
        <position position="59"/>
    </location>
    <ligand>
        <name>[4Fe-4S] cluster</name>
        <dbReference type="ChEBI" id="CHEBI:49883"/>
        <label>3</label>
    </ligand>
</feature>
<feature type="binding site" evidence="1">
    <location>
        <position position="63"/>
    </location>
    <ligand>
        <name>[4Fe-4S] cluster</name>
        <dbReference type="ChEBI" id="CHEBI:49883"/>
        <label>4</label>
    </ligand>
</feature>
<feature type="binding site" evidence="1">
    <location>
        <position position="82"/>
    </location>
    <ligand>
        <name>[4Fe-4S] cluster</name>
        <dbReference type="ChEBI" id="CHEBI:49883"/>
        <label>4</label>
    </ligand>
</feature>
<feature type="binding site" evidence="1">
    <location>
        <position position="85"/>
    </location>
    <ligand>
        <name>[4Fe-4S] cluster</name>
        <dbReference type="ChEBI" id="CHEBI:49883"/>
        <label>4</label>
    </ligand>
</feature>
<feature type="binding site" evidence="1">
    <location>
        <position position="88"/>
    </location>
    <ligand>
        <name>[4Fe-4S] cluster</name>
        <dbReference type="ChEBI" id="CHEBI:49883"/>
        <label>4</label>
    </ligand>
</feature>
<feature type="binding site" evidence="1">
    <location>
        <position position="92"/>
    </location>
    <ligand>
        <name>[4Fe-4S] cluster</name>
        <dbReference type="ChEBI" id="CHEBI:49883"/>
        <label>3</label>
    </ligand>
</feature>
<feature type="binding site" evidence="1">
    <location>
        <position position="143"/>
    </location>
    <ligand>
        <name>[4Fe-4S] cluster</name>
        <dbReference type="ChEBI" id="CHEBI:49883"/>
        <label>2</label>
    </ligand>
</feature>
<feature type="binding site" evidence="1">
    <location>
        <position position="146"/>
    </location>
    <ligand>
        <name>[4Fe-4S] cluster</name>
        <dbReference type="ChEBI" id="CHEBI:49883"/>
        <label>2</label>
    </ligand>
</feature>
<feature type="binding site" evidence="1">
    <location>
        <position position="155"/>
    </location>
    <ligand>
        <name>[4Fe-4S] cluster</name>
        <dbReference type="ChEBI" id="CHEBI:49883"/>
        <label>2</label>
    </ligand>
</feature>
<feature type="binding site" evidence="1">
    <location>
        <position position="159"/>
    </location>
    <ligand>
        <name>[4Fe-4S] cluster</name>
        <dbReference type="ChEBI" id="CHEBI:49883"/>
        <label>1</label>
    </ligand>
</feature>